<protein>
    <recommendedName>
        <fullName>G-protein coupled receptor homolog UL33</fullName>
    </recommendedName>
</protein>
<dbReference type="EMBL" id="AY446894">
    <property type="protein sequence ID" value="AAR31598.1"/>
    <property type="molecule type" value="Genomic_DNA"/>
</dbReference>
<dbReference type="RefSeq" id="YP_081492.1">
    <property type="nucleotide sequence ID" value="NC_006273.2"/>
</dbReference>
<dbReference type="SMR" id="Q6SW98"/>
<dbReference type="GlyCosmos" id="Q6SW98">
    <property type="glycosylation" value="3 sites, No reported glycans"/>
</dbReference>
<dbReference type="DNASU" id="3077468"/>
<dbReference type="GeneID" id="3077468"/>
<dbReference type="KEGG" id="vg:3077468"/>
<dbReference type="Proteomes" id="UP000000938">
    <property type="component" value="Segment"/>
</dbReference>
<dbReference type="GO" id="GO:0030430">
    <property type="term" value="C:host cell cytoplasm"/>
    <property type="evidence" value="ECO:0007669"/>
    <property type="project" value="UniProtKB-SubCell"/>
</dbReference>
<dbReference type="GO" id="GO:0020002">
    <property type="term" value="C:host cell plasma membrane"/>
    <property type="evidence" value="ECO:0007669"/>
    <property type="project" value="UniProtKB-SubCell"/>
</dbReference>
<dbReference type="GO" id="GO:0016020">
    <property type="term" value="C:membrane"/>
    <property type="evidence" value="ECO:0007669"/>
    <property type="project" value="UniProtKB-KW"/>
</dbReference>
<dbReference type="GO" id="GO:0044423">
    <property type="term" value="C:virion component"/>
    <property type="evidence" value="ECO:0007669"/>
    <property type="project" value="UniProtKB-KW"/>
</dbReference>
<dbReference type="GO" id="GO:0004930">
    <property type="term" value="F:G protein-coupled receptor activity"/>
    <property type="evidence" value="ECO:0007669"/>
    <property type="project" value="UniProtKB-KW"/>
</dbReference>
<dbReference type="CDD" id="cd00637">
    <property type="entry name" value="7tm_classA_rhodopsin-like"/>
    <property type="match status" value="1"/>
</dbReference>
<dbReference type="Gene3D" id="1.20.1070.10">
    <property type="entry name" value="Rhodopsin 7-helix transmembrane proteins"/>
    <property type="match status" value="1"/>
</dbReference>
<dbReference type="InterPro" id="IPR050119">
    <property type="entry name" value="CCR1-9-like"/>
</dbReference>
<dbReference type="InterPro" id="IPR000276">
    <property type="entry name" value="GPCR_Rhodpsn"/>
</dbReference>
<dbReference type="InterPro" id="IPR017452">
    <property type="entry name" value="GPCR_Rhodpsn_7TM"/>
</dbReference>
<dbReference type="PANTHER" id="PTHR10489">
    <property type="entry name" value="CELL ADHESION MOLECULE"/>
    <property type="match status" value="1"/>
</dbReference>
<dbReference type="PANTHER" id="PTHR10489:SF932">
    <property type="entry name" value="G-PROTEIN COUPLED RECEPTORS FAMILY 1 PROFILE DOMAIN-CONTAINING PROTEIN"/>
    <property type="match status" value="1"/>
</dbReference>
<dbReference type="Pfam" id="PF00001">
    <property type="entry name" value="7tm_1"/>
    <property type="match status" value="1"/>
</dbReference>
<dbReference type="PRINTS" id="PR00237">
    <property type="entry name" value="GPCRRHODOPSN"/>
</dbReference>
<dbReference type="SUPFAM" id="SSF81321">
    <property type="entry name" value="Family A G protein-coupled receptor-like"/>
    <property type="match status" value="1"/>
</dbReference>
<dbReference type="PROSITE" id="PS00237">
    <property type="entry name" value="G_PROTEIN_RECEP_F1_1"/>
    <property type="match status" value="1"/>
</dbReference>
<dbReference type="PROSITE" id="PS50262">
    <property type="entry name" value="G_PROTEIN_RECEP_F1_2"/>
    <property type="match status" value="1"/>
</dbReference>
<feature type="chain" id="PRO_0000416441" description="G-protein coupled receptor homolog UL33">
    <location>
        <begin position="1"/>
        <end position="412"/>
    </location>
</feature>
<feature type="topological domain" description="Virion surface" evidence="2">
    <location>
        <begin position="1"/>
        <end position="35"/>
    </location>
</feature>
<feature type="transmembrane region" description="Helical; Name=1" evidence="2">
    <location>
        <begin position="36"/>
        <end position="56"/>
    </location>
</feature>
<feature type="topological domain" description="Intravirion" evidence="2">
    <location>
        <begin position="57"/>
        <end position="80"/>
    </location>
</feature>
<feature type="transmembrane region" description="Helical; Name=2" evidence="2">
    <location>
        <begin position="81"/>
        <end position="101"/>
    </location>
</feature>
<feature type="topological domain" description="Virion surface" evidence="2">
    <location>
        <begin position="102"/>
        <end position="106"/>
    </location>
</feature>
<feature type="transmembrane region" description="Helical; Name=3" evidence="2">
    <location>
        <begin position="107"/>
        <end position="127"/>
    </location>
</feature>
<feature type="topological domain" description="Intravirion" evidence="2">
    <location>
        <begin position="128"/>
        <end position="147"/>
    </location>
</feature>
<feature type="transmembrane region" description="Helical; Name=4" evidence="2">
    <location>
        <begin position="148"/>
        <end position="168"/>
    </location>
</feature>
<feature type="topological domain" description="Virion surface" evidence="2">
    <location>
        <begin position="169"/>
        <end position="206"/>
    </location>
</feature>
<feature type="transmembrane region" description="Helical; Name=5" evidence="2">
    <location>
        <begin position="207"/>
        <end position="227"/>
    </location>
</feature>
<feature type="topological domain" description="Intravirion" evidence="2">
    <location>
        <begin position="228"/>
        <end position="244"/>
    </location>
</feature>
<feature type="transmembrane region" description="Helical; Name=6" evidence="2">
    <location>
        <begin position="245"/>
        <end position="265"/>
    </location>
</feature>
<feature type="topological domain" description="Virion surface" evidence="2">
    <location>
        <begin position="266"/>
        <end position="292"/>
    </location>
</feature>
<feature type="transmembrane region" description="Helical; Name=7" evidence="2">
    <location>
        <begin position="293"/>
        <end position="313"/>
    </location>
</feature>
<feature type="topological domain" description="Intravirion" evidence="2">
    <location>
        <begin position="314"/>
        <end position="412"/>
    </location>
</feature>
<feature type="region of interest" description="Disordered" evidence="4">
    <location>
        <begin position="377"/>
        <end position="412"/>
    </location>
</feature>
<feature type="compositionally biased region" description="Polar residues" evidence="4">
    <location>
        <begin position="388"/>
        <end position="397"/>
    </location>
</feature>
<feature type="glycosylation site" description="N-linked (GlcNAc...) asparagine; by host" evidence="2">
    <location>
        <position position="7"/>
    </location>
</feature>
<feature type="glycosylation site" description="N-linked (GlcNAc...) asparagine; by host" evidence="2">
    <location>
        <position position="19"/>
    </location>
</feature>
<feature type="glycosylation site" description="N-linked (GlcNAc...) asparagine; by host" evidence="2">
    <location>
        <position position="23"/>
    </location>
</feature>
<feature type="disulfide bond" evidence="3">
    <location>
        <begin position="105"/>
        <end position="188"/>
    </location>
</feature>
<organism>
    <name type="scientific">Human cytomegalovirus (strain Merlin)</name>
    <name type="common">HHV-5</name>
    <name type="synonym">Human herpesvirus 5</name>
    <dbReference type="NCBI Taxonomy" id="295027"/>
    <lineage>
        <taxon>Viruses</taxon>
        <taxon>Duplodnaviria</taxon>
        <taxon>Heunggongvirae</taxon>
        <taxon>Peploviricota</taxon>
        <taxon>Herviviricetes</taxon>
        <taxon>Herpesvirales</taxon>
        <taxon>Orthoherpesviridae</taxon>
        <taxon>Betaherpesvirinae</taxon>
        <taxon>Cytomegalovirus</taxon>
        <taxon>Cytomegalovirus humanbeta5</taxon>
        <taxon>Human cytomegalovirus</taxon>
    </lineage>
</organism>
<reference key="1">
    <citation type="journal article" date="2004" name="J. Gen. Virol.">
        <title>Genetic content of wild-type human cytomegalovirus.</title>
        <authorList>
            <person name="Dolan A."/>
            <person name="Cunningham C."/>
            <person name="Hector R.D."/>
            <person name="Hassan-Walker A.F."/>
            <person name="Lee L."/>
            <person name="Addison C."/>
            <person name="Dargan D.J."/>
            <person name="McGeoch D.J."/>
            <person name="Gatherer D."/>
            <person name="Emery V.C."/>
            <person name="Griffiths P.D."/>
            <person name="Sinzger C."/>
            <person name="McSharry B.P."/>
            <person name="Wilkinson G.W.G."/>
            <person name="Davison A.J."/>
        </authorList>
    </citation>
    <scope>NUCLEOTIDE SEQUENCE [LARGE SCALE GENOMIC DNA]</scope>
</reference>
<reference key="2">
    <citation type="journal article" date="2006" name="Trends Pharmacol. Sci.">
        <title>HCMV-encoded G-protein-coupled receptors as constitutively active modulators of cellular signaling networks.</title>
        <authorList>
            <person name="Vischer H.F."/>
            <person name="Leurs R."/>
            <person name="Smit M.J."/>
        </authorList>
    </citation>
    <scope>REVIEW ON FUNCTION</scope>
</reference>
<reference key="3">
    <citation type="journal article" date="2019" name="J. Biol. Chem.">
        <title>The human cytomegalovirus-encoded G protein-coupled receptor UL33 exhibits oncomodulatory properties.</title>
        <authorList>
            <person name="van Senten J.R."/>
            <person name="Bebelman M.P."/>
            <person name="Fan T.S."/>
            <person name="Heukers R."/>
            <person name="Bergkamp N.D."/>
            <person name="van Gasselt P."/>
            <person name="Langemeijer E.V."/>
            <person name="Slinger E."/>
            <person name="Lagerweij T."/>
            <person name="Rahbar A."/>
            <person name="Stigter-van Walsum M."/>
            <person name="Maussang D."/>
            <person name="Leurs R."/>
            <person name="Musters R.J.P."/>
            <person name="van Dongen G.A.M.S."/>
            <person name="Soederberg-Naucler C."/>
            <person name="Wuerdinger T."/>
            <person name="Siderius M."/>
            <person name="Smit M.J."/>
        </authorList>
    </citation>
    <scope>FUNCTION</scope>
    <scope>SUBCELLULAR LOCATION</scope>
</reference>
<reference key="4">
    <citation type="journal article" date="2020" name="Viruses">
        <title>Human Cytomegalovirus-Encoded G Protein-Coupled Receptor UL33 Facilitates Virus Dissemination via the Extracellular and Cell-to-Cell Route.</title>
        <authorList>
            <person name="van Senten J.R."/>
            <person name="Bebelman M.P."/>
            <person name="van Gasselt P."/>
            <person name="Bergkamp N.D."/>
            <person name="van den Bor J."/>
            <person name="Siderius M."/>
            <person name="Smit M.J."/>
        </authorList>
    </citation>
    <scope>FUNCTION</scope>
    <scope>DISRUPTION PHENOTYPE</scope>
</reference>
<reference key="5">
    <citation type="journal article" date="2021" name="J. Cell Sci.">
        <title>CMV-encoded GPCR pUL33 activates CREB and facilitates its recruitment to the MIE locus for efficient viral reactivation.</title>
        <authorList>
            <person name="Krishna B.A."/>
            <person name="Wass A.B."/>
            <person name="Dooley A.L."/>
            <person name="O'Connor C.M."/>
        </authorList>
    </citation>
    <scope>FUNCTION</scope>
    <scope>DISRUPTION PHENOTYPE</scope>
</reference>
<gene>
    <name type="primary">UL33</name>
</gene>
<accession>Q6SW98</accession>
<accession>D2K3K1</accession>
<comment type="function">
    <text evidence="5 6 7">G-protein-coupled receptor (vGPCR) that constitutively activates multiple oncogenic signaling pathways including STAT3, AP-1, phospholipase C, NF-kappa-B or cAMP-responsive element (CRE) pathways (PubMed:31519750). Plays an important role in viral reactivation from latency through activation of host CREB1, facilitating its recruitment to the viral major immediate early (MIE) genes. In turn, expression of the MIE-driven genes such as UL123 are de-repressed (PubMed:33199520). Also facilitates virus dissemination via the extracellular and cell-to-cell route (PubMed:32486172).</text>
</comment>
<comment type="subunit">
    <text evidence="1">Heterodimerizes with US28.</text>
</comment>
<comment type="subcellular location">
    <subcellularLocation>
        <location>Virion</location>
    </subcellularLocation>
    <subcellularLocation>
        <location evidence="1">Host cell membrane</location>
        <topology evidence="1">Multi-pass membrane protein</topology>
    </subcellularLocation>
    <subcellularLocation>
        <location evidence="5">Host cytoplasm</location>
    </subcellularLocation>
    <text evidence="5">Present in the virion assembly compartment (VAC) of HCMV-infected cells.</text>
</comment>
<comment type="disruption phenotype">
    <text evidence="6 7">UL33-deficient virus displays a growth defect due to deficiency in extracellular transmission (PubMed:32486172). In addition, UL33 disruption attenuates viral reactivation (PubMed:33199520).</text>
</comment>
<comment type="similarity">
    <text evidence="3">Belongs to the G-protein coupled receptor 1 family.</text>
</comment>
<sequence length="412" mass="46080">MDTIIHNTTNRSTDTPHVNITCNITEPLSAIRTTEAVINTFIIFVGGPLNAIVLITQLLTNRVLGYSTPTIYMTNLYSTNFLTLTVLPFIVLSNQWLLPASVASCKFLSVIYYSSCTVGFATVALIAADRYRVLHKRTYARQSYRSTYIILLLTWFAGLIFSMPAAVYTTVVIHNGTNGQSSNGHATCVLYFIADEVYTVLLSWKVLLTLVWGAAPVIMMTWFYAFFYSTVQRASQKQRSRTLTFVSVLLISFVALQTPYVSIMIFNSYATAAWPMDCEHLTLRRTIGTLSRLVPHLHCLINPILYALLGHDFLQRMRQCFRGQLLDRRAFLRSQQNQRATAETNLAAGNNSQSVATSLDTSSKNCNQHAKRSVSFNFPSGTWKGGQKTASNDTSTKIPHRLSQSHHNLSGV</sequence>
<evidence type="ECO:0000250" key="1">
    <source>
        <dbReference type="UniProtKB" id="P16849"/>
    </source>
</evidence>
<evidence type="ECO:0000255" key="2"/>
<evidence type="ECO:0000255" key="3">
    <source>
        <dbReference type="PROSITE-ProRule" id="PRU00521"/>
    </source>
</evidence>
<evidence type="ECO:0000256" key="4">
    <source>
        <dbReference type="SAM" id="MobiDB-lite"/>
    </source>
</evidence>
<evidence type="ECO:0000269" key="5">
    <source>
    </source>
</evidence>
<evidence type="ECO:0000269" key="6">
    <source>
    </source>
</evidence>
<evidence type="ECO:0000269" key="7">
    <source>
    </source>
</evidence>
<proteinExistence type="inferred from homology"/>
<organismHost>
    <name type="scientific">Homo sapiens</name>
    <name type="common">Human</name>
    <dbReference type="NCBI Taxonomy" id="9606"/>
</organismHost>
<name>UL33_HCMVM</name>
<keyword id="KW-1015">Disulfide bond</keyword>
<keyword id="KW-0297">G-protein coupled receptor</keyword>
<keyword id="KW-0325">Glycoprotein</keyword>
<keyword id="KW-1032">Host cell membrane</keyword>
<keyword id="KW-1035">Host cytoplasm</keyword>
<keyword id="KW-1043">Host membrane</keyword>
<keyword id="KW-0945">Host-virus interaction</keyword>
<keyword id="KW-1086">Inhibition of host chemokines by virus</keyword>
<keyword id="KW-0472">Membrane</keyword>
<keyword id="KW-0675">Receptor</keyword>
<keyword id="KW-1185">Reference proteome</keyword>
<keyword id="KW-0807">Transducer</keyword>
<keyword id="KW-0812">Transmembrane</keyword>
<keyword id="KW-1133">Transmembrane helix</keyword>
<keyword id="KW-0899">Viral immunoevasion</keyword>
<keyword id="KW-0946">Virion</keyword>